<feature type="chain" id="PRO_1000188516" description="HMP-PP phosphatase">
    <location>
        <begin position="1"/>
        <end position="273"/>
    </location>
</feature>
<feature type="active site" description="Nucleophile" evidence="1">
    <location>
        <position position="8"/>
    </location>
</feature>
<feature type="binding site" evidence="1">
    <location>
        <position position="8"/>
    </location>
    <ligand>
        <name>Mg(2+)</name>
        <dbReference type="ChEBI" id="CHEBI:18420"/>
    </ligand>
</feature>
<feature type="binding site" evidence="1">
    <location>
        <position position="10"/>
    </location>
    <ligand>
        <name>Mg(2+)</name>
        <dbReference type="ChEBI" id="CHEBI:18420"/>
    </ligand>
</feature>
<feature type="binding site" evidence="1">
    <location>
        <position position="212"/>
    </location>
    <ligand>
        <name>Mg(2+)</name>
        <dbReference type="ChEBI" id="CHEBI:18420"/>
    </ligand>
</feature>
<keyword id="KW-0378">Hydrolase</keyword>
<keyword id="KW-0460">Magnesium</keyword>
<keyword id="KW-0479">Metal-binding</keyword>
<name>COF_YERPG</name>
<dbReference type="EC" id="3.6.1.-" evidence="1"/>
<dbReference type="EMBL" id="CP000901">
    <property type="protein sequence ID" value="ABX87582.1"/>
    <property type="molecule type" value="Genomic_DNA"/>
</dbReference>
<dbReference type="RefSeq" id="WP_002208632.1">
    <property type="nucleotide sequence ID" value="NZ_CP009935.1"/>
</dbReference>
<dbReference type="SMR" id="A9QZP3"/>
<dbReference type="GeneID" id="57975563"/>
<dbReference type="KEGG" id="ypg:YpAngola_A3044"/>
<dbReference type="PATRIC" id="fig|349746.12.peg.4098"/>
<dbReference type="GO" id="GO:0002145">
    <property type="term" value="F:4-amino-5-hydroxymethyl-2-methylpyrimidine diphosphatase activity"/>
    <property type="evidence" value="ECO:0007669"/>
    <property type="project" value="RHEA"/>
</dbReference>
<dbReference type="GO" id="GO:0000287">
    <property type="term" value="F:magnesium ion binding"/>
    <property type="evidence" value="ECO:0000250"/>
    <property type="project" value="UniProtKB"/>
</dbReference>
<dbReference type="GO" id="GO:0016791">
    <property type="term" value="F:phosphatase activity"/>
    <property type="evidence" value="ECO:0000250"/>
    <property type="project" value="UniProtKB"/>
</dbReference>
<dbReference type="CDD" id="cd07516">
    <property type="entry name" value="HAD_Pase"/>
    <property type="match status" value="1"/>
</dbReference>
<dbReference type="FunFam" id="3.30.1240.10:FF:000018">
    <property type="entry name" value="HMP-PP phosphatase"/>
    <property type="match status" value="1"/>
</dbReference>
<dbReference type="Gene3D" id="3.30.1240.10">
    <property type="match status" value="1"/>
</dbReference>
<dbReference type="Gene3D" id="3.40.50.1000">
    <property type="entry name" value="HAD superfamily/HAD-like"/>
    <property type="match status" value="1"/>
</dbReference>
<dbReference type="HAMAP" id="MF_01847">
    <property type="entry name" value="HMP_PP_phosphat"/>
    <property type="match status" value="1"/>
</dbReference>
<dbReference type="InterPro" id="IPR000150">
    <property type="entry name" value="Cof"/>
</dbReference>
<dbReference type="InterPro" id="IPR036412">
    <property type="entry name" value="HAD-like_sf"/>
</dbReference>
<dbReference type="InterPro" id="IPR006379">
    <property type="entry name" value="HAD-SF_hydro_IIB"/>
</dbReference>
<dbReference type="InterPro" id="IPR023214">
    <property type="entry name" value="HAD_sf"/>
</dbReference>
<dbReference type="InterPro" id="IPR023938">
    <property type="entry name" value="HMP-PP_phosphatase"/>
</dbReference>
<dbReference type="NCBIfam" id="TIGR00099">
    <property type="entry name" value="Cof-subfamily"/>
    <property type="match status" value="1"/>
</dbReference>
<dbReference type="NCBIfam" id="TIGR01484">
    <property type="entry name" value="HAD-SF-IIB"/>
    <property type="match status" value="1"/>
</dbReference>
<dbReference type="NCBIfam" id="NF011705">
    <property type="entry name" value="PRK15126.1"/>
    <property type="match status" value="1"/>
</dbReference>
<dbReference type="PANTHER" id="PTHR47267">
    <property type="match status" value="1"/>
</dbReference>
<dbReference type="PANTHER" id="PTHR47267:SF2">
    <property type="entry name" value="HMP-PP PHOSPHATASE"/>
    <property type="match status" value="1"/>
</dbReference>
<dbReference type="Pfam" id="PF08282">
    <property type="entry name" value="Hydrolase_3"/>
    <property type="match status" value="1"/>
</dbReference>
<dbReference type="SFLD" id="SFLDG01140">
    <property type="entry name" value="C2.B:_Phosphomannomutase_and_P"/>
    <property type="match status" value="1"/>
</dbReference>
<dbReference type="SFLD" id="SFLDS00003">
    <property type="entry name" value="Haloacid_Dehalogenase"/>
    <property type="match status" value="1"/>
</dbReference>
<dbReference type="SUPFAM" id="SSF56784">
    <property type="entry name" value="HAD-like"/>
    <property type="match status" value="1"/>
</dbReference>
<dbReference type="PROSITE" id="PS01228">
    <property type="entry name" value="COF_1"/>
    <property type="match status" value="1"/>
</dbReference>
<dbReference type="PROSITE" id="PS01229">
    <property type="entry name" value="COF_2"/>
    <property type="match status" value="1"/>
</dbReference>
<proteinExistence type="inferred from homology"/>
<comment type="function">
    <text evidence="1">Catalyzes the hydrolysis of 4-amino-2-methyl-5-hydroxymethylpyrimidine pyrophosphate (HMP-PP) to 4-amino-2-methyl-5-hydroxymethylpyrimidine phosphate (HMP-P).</text>
</comment>
<comment type="catalytic activity">
    <reaction evidence="1">
        <text>4-amino-2-methyl-5-(diphosphooxymethyl)pyrimidine + H2O = 4-amino-2-methyl-5-(phosphooxymethyl)pyrimidine + phosphate + H(+)</text>
        <dbReference type="Rhea" id="RHEA:27914"/>
        <dbReference type="ChEBI" id="CHEBI:15377"/>
        <dbReference type="ChEBI" id="CHEBI:15378"/>
        <dbReference type="ChEBI" id="CHEBI:43474"/>
        <dbReference type="ChEBI" id="CHEBI:57841"/>
        <dbReference type="ChEBI" id="CHEBI:58354"/>
    </reaction>
</comment>
<comment type="cofactor">
    <cofactor evidence="1">
        <name>Mg(2+)</name>
        <dbReference type="ChEBI" id="CHEBI:18420"/>
    </cofactor>
</comment>
<comment type="similarity">
    <text evidence="1">Belongs to the HAD-like hydrolase superfamily. Cof family.</text>
</comment>
<reference key="1">
    <citation type="journal article" date="2010" name="J. Bacteriol.">
        <title>Genome sequence of the deep-rooted Yersinia pestis strain Angola reveals new insights into the evolution and pangenome of the plague bacterium.</title>
        <authorList>
            <person name="Eppinger M."/>
            <person name="Worsham P.L."/>
            <person name="Nikolich M.P."/>
            <person name="Riley D.R."/>
            <person name="Sebastian Y."/>
            <person name="Mou S."/>
            <person name="Achtman M."/>
            <person name="Lindler L.E."/>
            <person name="Ravel J."/>
        </authorList>
    </citation>
    <scope>NUCLEOTIDE SEQUENCE [LARGE SCALE GENOMIC DNA]</scope>
    <source>
        <strain>Angola</strain>
    </source>
</reference>
<protein>
    <recommendedName>
        <fullName evidence="1">HMP-PP phosphatase</fullName>
        <ecNumber evidence="1">3.6.1.-</ecNumber>
    </recommendedName>
</protein>
<accession>A9QZP3</accession>
<gene>
    <name evidence="1" type="primary">cof</name>
    <name type="ordered locus">YpAngola_A3044</name>
</gene>
<evidence type="ECO:0000255" key="1">
    <source>
        <dbReference type="HAMAP-Rule" id="MF_01847"/>
    </source>
</evidence>
<sequence>MYRLAAFDMDGTLLMRDHKIGSITLNALHQLADAGVTLTFATGRHYLDMKGILSHSGLNGYLITGNGTRVCDAEGNPLYGMDLPAELVEFVLRTPWQTNASIHLFRDDGWFTDRNDPDLLIAHTTSGFHFQLTEWDELPLTGNHKFCFIASHQELVELKAQLEQQMGGEADFCFSATDCLEVLPRGCNKGVALEKLSHHLDLTLADCMAFGDAMNDKEMLSRVGRGLVMGNALPQLKQELPQLQIIGRCEQQGVAHYLHHWLSSPHLTYSPEF</sequence>
<organism>
    <name type="scientific">Yersinia pestis bv. Antiqua (strain Angola)</name>
    <dbReference type="NCBI Taxonomy" id="349746"/>
    <lineage>
        <taxon>Bacteria</taxon>
        <taxon>Pseudomonadati</taxon>
        <taxon>Pseudomonadota</taxon>
        <taxon>Gammaproteobacteria</taxon>
        <taxon>Enterobacterales</taxon>
        <taxon>Yersiniaceae</taxon>
        <taxon>Yersinia</taxon>
    </lineage>
</organism>